<name>PDRP2_SYNWW</name>
<evidence type="ECO:0000255" key="1">
    <source>
        <dbReference type="HAMAP-Rule" id="MF_00921"/>
    </source>
</evidence>
<dbReference type="EC" id="2.7.11.32" evidence="1"/>
<dbReference type="EC" id="2.7.4.27" evidence="1"/>
<dbReference type="EMBL" id="CP000448">
    <property type="protein sequence ID" value="ABI68816.1"/>
    <property type="molecule type" value="Genomic_DNA"/>
</dbReference>
<dbReference type="RefSeq" id="WP_011640915.1">
    <property type="nucleotide sequence ID" value="NC_008346.1"/>
</dbReference>
<dbReference type="SMR" id="Q0AWT8"/>
<dbReference type="STRING" id="335541.Swol_1513"/>
<dbReference type="KEGG" id="swo:Swol_1513"/>
<dbReference type="eggNOG" id="COG1806">
    <property type="taxonomic scope" value="Bacteria"/>
</dbReference>
<dbReference type="HOGENOM" id="CLU_046206_2_1_9"/>
<dbReference type="OrthoDB" id="9782201at2"/>
<dbReference type="Proteomes" id="UP000001968">
    <property type="component" value="Chromosome"/>
</dbReference>
<dbReference type="GO" id="GO:0043531">
    <property type="term" value="F:ADP binding"/>
    <property type="evidence" value="ECO:0007669"/>
    <property type="project" value="UniProtKB-UniRule"/>
</dbReference>
<dbReference type="GO" id="GO:0005524">
    <property type="term" value="F:ATP binding"/>
    <property type="evidence" value="ECO:0007669"/>
    <property type="project" value="InterPro"/>
</dbReference>
<dbReference type="GO" id="GO:0016776">
    <property type="term" value="F:phosphotransferase activity, phosphate group as acceptor"/>
    <property type="evidence" value="ECO:0007669"/>
    <property type="project" value="UniProtKB-UniRule"/>
</dbReference>
<dbReference type="GO" id="GO:0004674">
    <property type="term" value="F:protein serine/threonine kinase activity"/>
    <property type="evidence" value="ECO:0007669"/>
    <property type="project" value="UniProtKB-UniRule"/>
</dbReference>
<dbReference type="HAMAP" id="MF_00921">
    <property type="entry name" value="PDRP"/>
    <property type="match status" value="1"/>
</dbReference>
<dbReference type="InterPro" id="IPR005177">
    <property type="entry name" value="Kinase-pyrophosphorylase"/>
</dbReference>
<dbReference type="InterPro" id="IPR026565">
    <property type="entry name" value="PPDK_reg"/>
</dbReference>
<dbReference type="NCBIfam" id="NF003742">
    <property type="entry name" value="PRK05339.1"/>
    <property type="match status" value="1"/>
</dbReference>
<dbReference type="PANTHER" id="PTHR31756">
    <property type="entry name" value="PYRUVATE, PHOSPHATE DIKINASE REGULATORY PROTEIN 1, CHLOROPLASTIC"/>
    <property type="match status" value="1"/>
</dbReference>
<dbReference type="PANTHER" id="PTHR31756:SF3">
    <property type="entry name" value="PYRUVATE, PHOSPHATE DIKINASE REGULATORY PROTEIN 1, CHLOROPLASTIC"/>
    <property type="match status" value="1"/>
</dbReference>
<dbReference type="Pfam" id="PF03618">
    <property type="entry name" value="Kinase-PPPase"/>
    <property type="match status" value="1"/>
</dbReference>
<reference key="1">
    <citation type="journal article" date="2010" name="Environ. Microbiol.">
        <title>The genome of Syntrophomonas wolfei: new insights into syntrophic metabolism and biohydrogen production.</title>
        <authorList>
            <person name="Sieber J.R."/>
            <person name="Sims D.R."/>
            <person name="Han C."/>
            <person name="Kim E."/>
            <person name="Lykidis A."/>
            <person name="Lapidus A.L."/>
            <person name="McDonnald E."/>
            <person name="Rohlin L."/>
            <person name="Culley D.E."/>
            <person name="Gunsalus R."/>
            <person name="McInerney M.J."/>
        </authorList>
    </citation>
    <scope>NUCLEOTIDE SEQUENCE [LARGE SCALE GENOMIC DNA]</scope>
    <source>
        <strain>DSM 2245B / Goettingen</strain>
    </source>
</reference>
<gene>
    <name type="ordered locus">Swol_1513</name>
</gene>
<keyword id="KW-0418">Kinase</keyword>
<keyword id="KW-0547">Nucleotide-binding</keyword>
<keyword id="KW-1185">Reference proteome</keyword>
<keyword id="KW-0723">Serine/threonine-protein kinase</keyword>
<keyword id="KW-0808">Transferase</keyword>
<proteinExistence type="inferred from homology"/>
<accession>Q0AWT8</accession>
<comment type="function">
    <text evidence="1">Bifunctional serine/threonine kinase and phosphorylase involved in the regulation of the pyruvate, phosphate dikinase (PPDK) by catalyzing its phosphorylation/dephosphorylation.</text>
</comment>
<comment type="catalytic activity">
    <reaction evidence="1">
        <text>N(tele)-phospho-L-histidyl/L-threonyl-[pyruvate, phosphate dikinase] + ADP = N(tele)-phospho-L-histidyl/O-phospho-L-threonyl-[pyruvate, phosphate dikinase] + AMP + H(+)</text>
        <dbReference type="Rhea" id="RHEA:43692"/>
        <dbReference type="Rhea" id="RHEA-COMP:10650"/>
        <dbReference type="Rhea" id="RHEA-COMP:10651"/>
        <dbReference type="ChEBI" id="CHEBI:15378"/>
        <dbReference type="ChEBI" id="CHEBI:30013"/>
        <dbReference type="ChEBI" id="CHEBI:61977"/>
        <dbReference type="ChEBI" id="CHEBI:83586"/>
        <dbReference type="ChEBI" id="CHEBI:456215"/>
        <dbReference type="ChEBI" id="CHEBI:456216"/>
        <dbReference type="EC" id="2.7.11.32"/>
    </reaction>
</comment>
<comment type="catalytic activity">
    <reaction evidence="1">
        <text>N(tele)-phospho-L-histidyl/O-phospho-L-threonyl-[pyruvate, phosphate dikinase] + phosphate + H(+) = N(tele)-phospho-L-histidyl/L-threonyl-[pyruvate, phosphate dikinase] + diphosphate</text>
        <dbReference type="Rhea" id="RHEA:43696"/>
        <dbReference type="Rhea" id="RHEA-COMP:10650"/>
        <dbReference type="Rhea" id="RHEA-COMP:10651"/>
        <dbReference type="ChEBI" id="CHEBI:15378"/>
        <dbReference type="ChEBI" id="CHEBI:30013"/>
        <dbReference type="ChEBI" id="CHEBI:33019"/>
        <dbReference type="ChEBI" id="CHEBI:43474"/>
        <dbReference type="ChEBI" id="CHEBI:61977"/>
        <dbReference type="ChEBI" id="CHEBI:83586"/>
        <dbReference type="EC" id="2.7.4.27"/>
    </reaction>
</comment>
<comment type="similarity">
    <text evidence="1">Belongs to the pyruvate, phosphate/water dikinase regulatory protein family. PDRP subfamily.</text>
</comment>
<organism>
    <name type="scientific">Syntrophomonas wolfei subsp. wolfei (strain DSM 2245B / Goettingen)</name>
    <dbReference type="NCBI Taxonomy" id="335541"/>
    <lineage>
        <taxon>Bacteria</taxon>
        <taxon>Bacillati</taxon>
        <taxon>Bacillota</taxon>
        <taxon>Clostridia</taxon>
        <taxon>Eubacteriales</taxon>
        <taxon>Syntrophomonadaceae</taxon>
        <taxon>Syntrophomonas</taxon>
    </lineage>
</organism>
<protein>
    <recommendedName>
        <fullName evidence="1">Putative pyruvate, phosphate dikinase regulatory protein 2</fullName>
        <shortName evidence="1">PPDK regulatory protein 2</shortName>
        <ecNumber evidence="1">2.7.11.32</ecNumber>
        <ecNumber evidence="1">2.7.4.27</ecNumber>
    </recommendedName>
</protein>
<feature type="chain" id="PRO_0000316752" description="Putative pyruvate, phosphate dikinase regulatory protein 2">
    <location>
        <begin position="1"/>
        <end position="273"/>
    </location>
</feature>
<feature type="binding site" evidence="1">
    <location>
        <begin position="151"/>
        <end position="158"/>
    </location>
    <ligand>
        <name>ADP</name>
        <dbReference type="ChEBI" id="CHEBI:456216"/>
    </ligand>
</feature>
<sequence length="273" mass="30691">MSNHLPGVFIVSDSIGETAEMVVRAAASQFNSGNMEIRQVPNISDTETLEEIINQAAASNFIIAYTLVINELADFLKMEARKKGVICVDVLGPVIEAFKSVSDIEPRREPGLLRKVDEMYYRRVEAVEFAVRYDDGKDPRGVMQSDIVLVGVSRTSKTPLSMYLAHKRIKVANVPLVPEVEPPEEIFQVEKGKVIGLVINPEQLNQIRTERLKTLGLKGQASYANLERILEEMEYAQEIMKRLGCPVIDVTNRAVEETASKILEIYYRRLSHV</sequence>